<feature type="chain" id="PRO_1000213530" description="UPF0284 protein M164_0030">
    <location>
        <begin position="1"/>
        <end position="347"/>
    </location>
</feature>
<organism>
    <name type="scientific">Saccharolobus islandicus (strain M.16.4 / Kamchatka #3)</name>
    <name type="common">Sulfolobus islandicus</name>
    <dbReference type="NCBI Taxonomy" id="426118"/>
    <lineage>
        <taxon>Archaea</taxon>
        <taxon>Thermoproteota</taxon>
        <taxon>Thermoprotei</taxon>
        <taxon>Sulfolobales</taxon>
        <taxon>Sulfolobaceae</taxon>
        <taxon>Saccharolobus</taxon>
    </lineage>
</organism>
<reference key="1">
    <citation type="journal article" date="2009" name="Proc. Natl. Acad. Sci. U.S.A.">
        <title>Biogeography of the Sulfolobus islandicus pan-genome.</title>
        <authorList>
            <person name="Reno M.L."/>
            <person name="Held N.L."/>
            <person name="Fields C.J."/>
            <person name="Burke P.V."/>
            <person name="Whitaker R.J."/>
        </authorList>
    </citation>
    <scope>NUCLEOTIDE SEQUENCE [LARGE SCALE GENOMIC DNA]</scope>
    <source>
        <strain>M.16.4 / Kamchatka #3</strain>
    </source>
</reference>
<comment type="similarity">
    <text evidence="1">Belongs to the UPF0284 family.</text>
</comment>
<proteinExistence type="inferred from homology"/>
<protein>
    <recommendedName>
        <fullName evidence="1">UPF0284 protein M164_0030</fullName>
    </recommendedName>
</protein>
<evidence type="ECO:0000255" key="1">
    <source>
        <dbReference type="HAMAP-Rule" id="MF_01086"/>
    </source>
</evidence>
<accession>C4KJE6</accession>
<gene>
    <name type="ordered locus">M164_0030</name>
</gene>
<sequence length="347" mass="37078">MIKEYYGAETFILNKDFAYILVIGTTDVSLIPGLTIAGATPELTHFTPAADAEYVLLGKCKSINTIPVSPTGIPTPALLTRASLSFINPLKIVVNAGSRIVPKIPYIDLQGEPGKDIRKQALSMEKVNNIIENSIKLGEELSNEYELIMIGESIPAGTTTAMATLLALGYDAMDKVSSASPDNPKELKRKVVEEALRNLPTDPLQRLAKVSDPVLLGVAGTSLGFKGKILLAGGTQMTAAAAIINEFDKNKLKDITIGTTKWIVEDKFADMLSLAKQVGVKVLASMLDLSISAYEGIRAYEKGYVKEGVGAGGSAIMALVRGVSNNTLVRKIDELYGELVGSNNLHI</sequence>
<dbReference type="EMBL" id="CP001402">
    <property type="protein sequence ID" value="ACR40666.1"/>
    <property type="molecule type" value="Genomic_DNA"/>
</dbReference>
<dbReference type="RefSeq" id="WP_012735357.1">
    <property type="nucleotide sequence ID" value="NC_012726.1"/>
</dbReference>
<dbReference type="SMR" id="C4KJE6"/>
<dbReference type="GeneID" id="84060530"/>
<dbReference type="KEGG" id="sid:M164_0030"/>
<dbReference type="HOGENOM" id="CLU_053134_0_0_2"/>
<dbReference type="Proteomes" id="UP000001479">
    <property type="component" value="Chromosome"/>
</dbReference>
<dbReference type="GO" id="GO:0008939">
    <property type="term" value="F:nicotinate-nucleotide-dimethylbenzimidazole phosphoribosyltransferase activity"/>
    <property type="evidence" value="ECO:0007669"/>
    <property type="project" value="InterPro"/>
</dbReference>
<dbReference type="CDD" id="cd02439">
    <property type="entry name" value="DMB-PRT_CobT"/>
    <property type="match status" value="1"/>
</dbReference>
<dbReference type="Gene3D" id="3.40.50.10210">
    <property type="match status" value="1"/>
</dbReference>
<dbReference type="HAMAP" id="MF_01086">
    <property type="entry name" value="UPF0284"/>
    <property type="match status" value="1"/>
</dbReference>
<dbReference type="InterPro" id="IPR003200">
    <property type="entry name" value="Nict_dMeBzImd_PRibTrfase"/>
</dbReference>
<dbReference type="InterPro" id="IPR002805">
    <property type="entry name" value="Nict_dMeBzImd_PRibTrfase_arc"/>
</dbReference>
<dbReference type="InterPro" id="IPR036087">
    <property type="entry name" value="Nict_dMeBzImd_PRibTrfase_sf"/>
</dbReference>
<dbReference type="NCBIfam" id="TIGR00303">
    <property type="entry name" value="nicotinate mononucleotide-dependent phosphoribosyltransferase CobT"/>
    <property type="match status" value="1"/>
</dbReference>
<dbReference type="NCBIfam" id="NF003368">
    <property type="entry name" value="PRK04447.1-1"/>
    <property type="match status" value="1"/>
</dbReference>
<dbReference type="NCBIfam" id="NF003370">
    <property type="entry name" value="PRK04447.1-3"/>
    <property type="match status" value="1"/>
</dbReference>
<dbReference type="NCBIfam" id="NF003372">
    <property type="entry name" value="PRK04447.1-5"/>
    <property type="match status" value="1"/>
</dbReference>
<dbReference type="PANTHER" id="PTHR38811">
    <property type="match status" value="1"/>
</dbReference>
<dbReference type="PANTHER" id="PTHR38811:SF1">
    <property type="entry name" value="UPF0284 PROTEIN SLL1500"/>
    <property type="match status" value="1"/>
</dbReference>
<dbReference type="Pfam" id="PF02277">
    <property type="entry name" value="DBI_PRT"/>
    <property type="match status" value="1"/>
</dbReference>
<dbReference type="SUPFAM" id="SSF52733">
    <property type="entry name" value="Nicotinate mononucleotide:5,6-dimethylbenzimidazole phosphoribosyltransferase (CobT)"/>
    <property type="match status" value="1"/>
</dbReference>
<name>Y030_SACI6</name>